<name>PA3A_LITPA</name>
<proteinExistence type="evidence at protein level"/>
<organism>
    <name type="scientific">Lithobates palustris</name>
    <name type="common">Pickerel frog</name>
    <name type="synonym">Rana palustris</name>
    <dbReference type="NCBI Taxonomy" id="298395"/>
    <lineage>
        <taxon>Eukaryota</taxon>
        <taxon>Metazoa</taxon>
        <taxon>Chordata</taxon>
        <taxon>Craniata</taxon>
        <taxon>Vertebrata</taxon>
        <taxon>Euteleostomi</taxon>
        <taxon>Amphibia</taxon>
        <taxon>Batrachia</taxon>
        <taxon>Anura</taxon>
        <taxon>Neobatrachia</taxon>
        <taxon>Ranoidea</taxon>
        <taxon>Ranidae</taxon>
        <taxon>Lithobates</taxon>
    </lineage>
</organism>
<reference evidence="3" key="1">
    <citation type="journal article" date="2000" name="Biochim. Biophys. Acta">
        <title>Multiple antimicrobial peptides and peptides related to bradykinin and neuromedin N isolated from skin secretions of the pickerel frog, Rana palustris.</title>
        <authorList>
            <person name="Basir Y.J."/>
            <person name="Knoop F.C."/>
            <person name="Dulka J."/>
            <person name="Conlon J.M."/>
        </authorList>
    </citation>
    <scope>PROTEIN SEQUENCE</scope>
    <scope>FUNCTION</scope>
    <scope>SUBCELLULAR LOCATION</scope>
    <scope>TISSUE SPECIFICITY</scope>
    <scope>MASS SPECTROMETRY</scope>
    <source>
        <tissue evidence="2">Skin secretion</tissue>
    </source>
</reference>
<sequence>GIFPKIIGKGIKTGIVNGIKSLVKGVGMKVFKAGLNNIGNTGCNEDEC</sequence>
<comment type="function">
    <text evidence="2">Antimicrobial activity against Gram-negative bacterium E.coli.</text>
</comment>
<comment type="subcellular location">
    <subcellularLocation>
        <location evidence="2">Secreted</location>
    </subcellularLocation>
</comment>
<comment type="tissue specificity">
    <text evidence="2">Expressed by the skin glands.</text>
</comment>
<comment type="mass spectrometry"/>
<comment type="similarity">
    <text evidence="2">Belongs to the frog skin active peptide (FSAP) family. Brevinin subfamily.</text>
</comment>
<feature type="chain" id="PRO_0000190094" description="Palustrin-3a">
    <location>
        <begin position="1"/>
        <end position="48"/>
    </location>
</feature>
<feature type="disulfide bond" evidence="1">
    <location>
        <begin position="43"/>
        <end position="48"/>
    </location>
</feature>
<accession>P84281</accession>
<dbReference type="GO" id="GO:0005576">
    <property type="term" value="C:extracellular region"/>
    <property type="evidence" value="ECO:0000314"/>
    <property type="project" value="UniProtKB"/>
</dbReference>
<dbReference type="GO" id="GO:0050829">
    <property type="term" value="P:defense response to Gram-negative bacterium"/>
    <property type="evidence" value="ECO:0000314"/>
    <property type="project" value="UniProtKB"/>
</dbReference>
<protein>
    <recommendedName>
        <fullName>Palustrin-3a</fullName>
    </recommendedName>
</protein>
<evidence type="ECO:0000250" key="1">
    <source>
        <dbReference type="UniProtKB" id="P82875"/>
    </source>
</evidence>
<evidence type="ECO:0000269" key="2">
    <source>
    </source>
</evidence>
<evidence type="ECO:0000305" key="3"/>
<keyword id="KW-0878">Amphibian defense peptide</keyword>
<keyword id="KW-0044">Antibiotic</keyword>
<keyword id="KW-0929">Antimicrobial</keyword>
<keyword id="KW-0903">Direct protein sequencing</keyword>
<keyword id="KW-1015">Disulfide bond</keyword>
<keyword id="KW-0964">Secreted</keyword>